<accession>B9KJI0</accession>
<comment type="function">
    <text evidence="1">NDH-1 shuttles electrons from NADH, via FMN and iron-sulfur (Fe-S) centers, to quinones in the respiratory chain. The immediate electron acceptor for the enzyme in this species is believed to be ubiquinone. Couples the redox reaction to proton translocation (for every two electrons transferred, four hydrogen ions are translocated across the cytoplasmic membrane), and thus conserves the redox energy in a proton gradient.</text>
</comment>
<comment type="catalytic activity">
    <reaction evidence="1">
        <text>a quinone + NADH + 5 H(+)(in) = a quinol + NAD(+) + 4 H(+)(out)</text>
        <dbReference type="Rhea" id="RHEA:57888"/>
        <dbReference type="ChEBI" id="CHEBI:15378"/>
        <dbReference type="ChEBI" id="CHEBI:24646"/>
        <dbReference type="ChEBI" id="CHEBI:57540"/>
        <dbReference type="ChEBI" id="CHEBI:57945"/>
        <dbReference type="ChEBI" id="CHEBI:132124"/>
    </reaction>
</comment>
<comment type="cofactor">
    <cofactor evidence="1">
        <name>[4Fe-4S] cluster</name>
        <dbReference type="ChEBI" id="CHEBI:49883"/>
    </cofactor>
    <text evidence="1">Binds 1 [4Fe-4S] cluster.</text>
</comment>
<comment type="subunit">
    <text evidence="1">NDH-1 is composed of 14 different subunits. Subunits NuoB, C, D, E, F, and G constitute the peripheral sector of the complex.</text>
</comment>
<comment type="subcellular location">
    <subcellularLocation>
        <location evidence="1">Cell inner membrane</location>
        <topology evidence="1">Peripheral membrane protein</topology>
        <orientation evidence="1">Cytoplasmic side</orientation>
    </subcellularLocation>
</comment>
<comment type="similarity">
    <text evidence="1">Belongs to the complex I 20 kDa subunit family.</text>
</comment>
<proteinExistence type="inferred from homology"/>
<protein>
    <recommendedName>
        <fullName evidence="1">NADH-quinone oxidoreductase subunit B 2</fullName>
        <ecNumber evidence="1">7.1.1.-</ecNumber>
    </recommendedName>
    <alternativeName>
        <fullName evidence="1">NADH dehydrogenase I subunit B 2</fullName>
    </alternativeName>
    <alternativeName>
        <fullName evidence="1">NDH-1 subunit B 2</fullName>
    </alternativeName>
</protein>
<gene>
    <name evidence="1" type="primary">nuoB2</name>
    <name type="ordered locus">RSKD131_1417</name>
</gene>
<feature type="chain" id="PRO_0000376335" description="NADH-quinone oxidoreductase subunit B 2">
    <location>
        <begin position="1"/>
        <end position="205"/>
    </location>
</feature>
<feature type="binding site" evidence="1">
    <location>
        <position position="47"/>
    </location>
    <ligand>
        <name>[4Fe-4S] cluster</name>
        <dbReference type="ChEBI" id="CHEBI:49883"/>
    </ligand>
</feature>
<feature type="binding site" evidence="1">
    <location>
        <position position="48"/>
    </location>
    <ligand>
        <name>[4Fe-4S] cluster</name>
        <dbReference type="ChEBI" id="CHEBI:49883"/>
    </ligand>
</feature>
<feature type="binding site" evidence="1">
    <location>
        <position position="113"/>
    </location>
    <ligand>
        <name>[4Fe-4S] cluster</name>
        <dbReference type="ChEBI" id="CHEBI:49883"/>
    </ligand>
</feature>
<feature type="binding site" evidence="1">
    <location>
        <position position="142"/>
    </location>
    <ligand>
        <name>[4Fe-4S] cluster</name>
        <dbReference type="ChEBI" id="CHEBI:49883"/>
    </ligand>
</feature>
<evidence type="ECO:0000255" key="1">
    <source>
        <dbReference type="HAMAP-Rule" id="MF_01356"/>
    </source>
</evidence>
<sequence length="205" mass="22908">MSWTIGRPDAEAPEDRMAASHLFTRLDDLVAWSRKHSLWPFNFGLSCCYVEMATALTPVYDQARFGAEVIRSTPRQADLLIVSGTVFRKMAVPLYRLYSQMREPRWVISMGACANSGGMYDIYSVVQGVDSFLPVDVYVPGCPPRPEALMEALVLLQSKIATEARPLQIRMGETGPARPFDPVPRRDALREARMAVTRLADPEAT</sequence>
<organism>
    <name type="scientific">Cereibacter sphaeroides (strain KD131 / KCTC 12085)</name>
    <name type="common">Rhodobacter sphaeroides</name>
    <dbReference type="NCBI Taxonomy" id="557760"/>
    <lineage>
        <taxon>Bacteria</taxon>
        <taxon>Pseudomonadati</taxon>
        <taxon>Pseudomonadota</taxon>
        <taxon>Alphaproteobacteria</taxon>
        <taxon>Rhodobacterales</taxon>
        <taxon>Paracoccaceae</taxon>
        <taxon>Cereibacter</taxon>
    </lineage>
</organism>
<keyword id="KW-0004">4Fe-4S</keyword>
<keyword id="KW-0997">Cell inner membrane</keyword>
<keyword id="KW-1003">Cell membrane</keyword>
<keyword id="KW-0408">Iron</keyword>
<keyword id="KW-0411">Iron-sulfur</keyword>
<keyword id="KW-0472">Membrane</keyword>
<keyword id="KW-0479">Metal-binding</keyword>
<keyword id="KW-0520">NAD</keyword>
<keyword id="KW-0874">Quinone</keyword>
<keyword id="KW-1278">Translocase</keyword>
<keyword id="KW-0813">Transport</keyword>
<keyword id="KW-0830">Ubiquinone</keyword>
<name>NUOB2_CERSK</name>
<dbReference type="EC" id="7.1.1.-" evidence="1"/>
<dbReference type="EMBL" id="CP001150">
    <property type="protein sequence ID" value="ACM01277.1"/>
    <property type="molecule type" value="Genomic_DNA"/>
</dbReference>
<dbReference type="RefSeq" id="WP_002720250.1">
    <property type="nucleotide sequence ID" value="NC_011963.1"/>
</dbReference>
<dbReference type="SMR" id="B9KJI0"/>
<dbReference type="GeneID" id="67446833"/>
<dbReference type="KEGG" id="rsk:RSKD131_1417"/>
<dbReference type="HOGENOM" id="CLU_055737_7_3_5"/>
<dbReference type="GO" id="GO:0005886">
    <property type="term" value="C:plasma membrane"/>
    <property type="evidence" value="ECO:0007669"/>
    <property type="project" value="UniProtKB-SubCell"/>
</dbReference>
<dbReference type="GO" id="GO:0045271">
    <property type="term" value="C:respiratory chain complex I"/>
    <property type="evidence" value="ECO:0007669"/>
    <property type="project" value="TreeGrafter"/>
</dbReference>
<dbReference type="GO" id="GO:0051539">
    <property type="term" value="F:4 iron, 4 sulfur cluster binding"/>
    <property type="evidence" value="ECO:0007669"/>
    <property type="project" value="UniProtKB-KW"/>
</dbReference>
<dbReference type="GO" id="GO:0005506">
    <property type="term" value="F:iron ion binding"/>
    <property type="evidence" value="ECO:0007669"/>
    <property type="project" value="UniProtKB-UniRule"/>
</dbReference>
<dbReference type="GO" id="GO:0008137">
    <property type="term" value="F:NADH dehydrogenase (ubiquinone) activity"/>
    <property type="evidence" value="ECO:0007669"/>
    <property type="project" value="InterPro"/>
</dbReference>
<dbReference type="GO" id="GO:0050136">
    <property type="term" value="F:NADH:ubiquinone reductase (non-electrogenic) activity"/>
    <property type="evidence" value="ECO:0007669"/>
    <property type="project" value="UniProtKB-UniRule"/>
</dbReference>
<dbReference type="GO" id="GO:0048038">
    <property type="term" value="F:quinone binding"/>
    <property type="evidence" value="ECO:0007669"/>
    <property type="project" value="UniProtKB-KW"/>
</dbReference>
<dbReference type="GO" id="GO:0009060">
    <property type="term" value="P:aerobic respiration"/>
    <property type="evidence" value="ECO:0007669"/>
    <property type="project" value="TreeGrafter"/>
</dbReference>
<dbReference type="GO" id="GO:0015990">
    <property type="term" value="P:electron transport coupled proton transport"/>
    <property type="evidence" value="ECO:0007669"/>
    <property type="project" value="TreeGrafter"/>
</dbReference>
<dbReference type="FunFam" id="3.40.50.12280:FF:000002">
    <property type="entry name" value="NADH-quinone oxidoreductase subunit B"/>
    <property type="match status" value="1"/>
</dbReference>
<dbReference type="Gene3D" id="3.40.50.12280">
    <property type="match status" value="1"/>
</dbReference>
<dbReference type="HAMAP" id="MF_01356">
    <property type="entry name" value="NDH1_NuoB"/>
    <property type="match status" value="1"/>
</dbReference>
<dbReference type="InterPro" id="IPR006137">
    <property type="entry name" value="NADH_UbQ_OxRdtase-like_20kDa"/>
</dbReference>
<dbReference type="InterPro" id="IPR006138">
    <property type="entry name" value="NADH_UQ_OxRdtase_20Kd_su"/>
</dbReference>
<dbReference type="NCBIfam" id="TIGR01957">
    <property type="entry name" value="nuoB_fam"/>
    <property type="match status" value="1"/>
</dbReference>
<dbReference type="NCBIfam" id="NF005012">
    <property type="entry name" value="PRK06411.1"/>
    <property type="match status" value="1"/>
</dbReference>
<dbReference type="PANTHER" id="PTHR11995">
    <property type="entry name" value="NADH DEHYDROGENASE"/>
    <property type="match status" value="1"/>
</dbReference>
<dbReference type="PANTHER" id="PTHR11995:SF14">
    <property type="entry name" value="NADH DEHYDROGENASE [UBIQUINONE] IRON-SULFUR PROTEIN 7, MITOCHONDRIAL"/>
    <property type="match status" value="1"/>
</dbReference>
<dbReference type="Pfam" id="PF01058">
    <property type="entry name" value="Oxidored_q6"/>
    <property type="match status" value="1"/>
</dbReference>
<dbReference type="SUPFAM" id="SSF56770">
    <property type="entry name" value="HydA/Nqo6-like"/>
    <property type="match status" value="1"/>
</dbReference>
<dbReference type="PROSITE" id="PS01150">
    <property type="entry name" value="COMPLEX1_20K"/>
    <property type="match status" value="1"/>
</dbReference>
<reference key="1">
    <citation type="journal article" date="2009" name="J. Bacteriol.">
        <title>Complete genome sequence of Rhodobacter sphaeroides KD131.</title>
        <authorList>
            <person name="Lim S.-K."/>
            <person name="Kim S.J."/>
            <person name="Cha S.H."/>
            <person name="Oh Y.-K."/>
            <person name="Rhee H.-J."/>
            <person name="Kim M.-S."/>
            <person name="Lee J.K."/>
        </authorList>
    </citation>
    <scope>NUCLEOTIDE SEQUENCE [LARGE SCALE GENOMIC DNA]</scope>
    <source>
        <strain>KD131 / KCTC 12085</strain>
    </source>
</reference>